<gene>
    <name type="primary">SQS1</name>
    <name type="ordered locus">YALI0A10076g</name>
</gene>
<sequence length="445" mass="51145">MGKLIELLLHPSELSAAIHYKLWRQPLHPRDLSKESTELRRCYELLDVCSRSFAAVIRELHPEVRDAVMLFYLILRALDTIEDDMTLSRDIKIPILRDFTKCMKTPGWKFTDSDPNERDRVVLQEFPVVMTEFNKLKPKYQEVIYDITDRMGNGMADYVIDDDFNNNGVDTIAAYDLYCHHVAGIVGEGLTRITILAGFGTDVLHENPRLQESMGLFLQKVNIIRDYREDIDVNRAFWPREIWHKYAEEMRDFKDPKYSKKALHCTSDLVANALGHATDCLDYLDNVTDPSTFTFCAIPQVMAIATLDLVYRNPDVFQKNVKLRKGTTVSLILEASNVSGVCDIFTRYARKVYKKSDPNDPNYFRVSVLCGKIEQHAALIKRQRGPPAKTIAQLEGERKEMALSLIVCLAVIFSMSGLMAYIAYVSGFRWSPREIFDSKMFPLRD</sequence>
<organism>
    <name type="scientific">Yarrowia lipolytica (strain CLIB 122 / E 150)</name>
    <name type="common">Yeast</name>
    <name type="synonym">Candida lipolytica</name>
    <dbReference type="NCBI Taxonomy" id="284591"/>
    <lineage>
        <taxon>Eukaryota</taxon>
        <taxon>Fungi</taxon>
        <taxon>Dikarya</taxon>
        <taxon>Ascomycota</taxon>
        <taxon>Saccharomycotina</taxon>
        <taxon>Dipodascomycetes</taxon>
        <taxon>Dipodascales</taxon>
        <taxon>Dipodascales incertae sedis</taxon>
        <taxon>Yarrowia</taxon>
    </lineage>
</organism>
<proteinExistence type="inferred from homology"/>
<reference key="1">
    <citation type="journal article" date="2000" name="Yeast">
        <title>Cloning and characterization of the Yarrowia lipolytica squalene synthase (SQS1) gene and functional complementation of the Saccharomyces cerevisiae erg9 mutation.</title>
        <authorList>
            <person name="Merkulov S."/>
            <person name="van Assema F."/>
            <person name="Springer J."/>
            <person name="Fernandez Del Carmen A."/>
            <person name="Mooibroek H."/>
        </authorList>
    </citation>
    <scope>NUCLEOTIDE SEQUENCE [GENOMIC DNA]</scope>
    <scope>FUNCTION</scope>
</reference>
<reference key="2">
    <citation type="journal article" date="2004" name="Nature">
        <title>Genome evolution in yeasts.</title>
        <authorList>
            <person name="Dujon B."/>
            <person name="Sherman D."/>
            <person name="Fischer G."/>
            <person name="Durrens P."/>
            <person name="Casaregola S."/>
            <person name="Lafontaine I."/>
            <person name="de Montigny J."/>
            <person name="Marck C."/>
            <person name="Neuveglise C."/>
            <person name="Talla E."/>
            <person name="Goffard N."/>
            <person name="Frangeul L."/>
            <person name="Aigle M."/>
            <person name="Anthouard V."/>
            <person name="Babour A."/>
            <person name="Barbe V."/>
            <person name="Barnay S."/>
            <person name="Blanchin S."/>
            <person name="Beckerich J.-M."/>
            <person name="Beyne E."/>
            <person name="Bleykasten C."/>
            <person name="Boisrame A."/>
            <person name="Boyer J."/>
            <person name="Cattolico L."/>
            <person name="Confanioleri F."/>
            <person name="de Daruvar A."/>
            <person name="Despons L."/>
            <person name="Fabre E."/>
            <person name="Fairhead C."/>
            <person name="Ferry-Dumazet H."/>
            <person name="Groppi A."/>
            <person name="Hantraye F."/>
            <person name="Hennequin C."/>
            <person name="Jauniaux N."/>
            <person name="Joyet P."/>
            <person name="Kachouri R."/>
            <person name="Kerrest A."/>
            <person name="Koszul R."/>
            <person name="Lemaire M."/>
            <person name="Lesur I."/>
            <person name="Ma L."/>
            <person name="Muller H."/>
            <person name="Nicaud J.-M."/>
            <person name="Nikolski M."/>
            <person name="Oztas S."/>
            <person name="Ozier-Kalogeropoulos O."/>
            <person name="Pellenz S."/>
            <person name="Potier S."/>
            <person name="Richard G.-F."/>
            <person name="Straub M.-L."/>
            <person name="Suleau A."/>
            <person name="Swennen D."/>
            <person name="Tekaia F."/>
            <person name="Wesolowski-Louvel M."/>
            <person name="Westhof E."/>
            <person name="Wirth B."/>
            <person name="Zeniou-Meyer M."/>
            <person name="Zivanovic Y."/>
            <person name="Bolotin-Fukuhara M."/>
            <person name="Thierry A."/>
            <person name="Bouchier C."/>
            <person name="Caudron B."/>
            <person name="Scarpelli C."/>
            <person name="Gaillardin C."/>
            <person name="Weissenbach J."/>
            <person name="Wincker P."/>
            <person name="Souciet J.-L."/>
        </authorList>
    </citation>
    <scope>NUCLEOTIDE SEQUENCE [LARGE SCALE GENOMIC DNA]</scope>
    <source>
        <strain>CLIB 122 / E 150</strain>
    </source>
</reference>
<protein>
    <recommendedName>
        <fullName>Squalene synthase</fullName>
        <shortName>SQS</shortName>
        <shortName>SS</shortName>
        <ecNumber>2.5.1.21</ecNumber>
    </recommendedName>
    <alternativeName>
        <fullName>FPP:FPP farnesyltransferase</fullName>
    </alternativeName>
    <alternativeName>
        <fullName>Farnesyl-diphosphate farnesyltransferase</fullName>
    </alternativeName>
</protein>
<evidence type="ECO:0000250" key="1"/>
<evidence type="ECO:0000250" key="2">
    <source>
        <dbReference type="UniProtKB" id="P29704"/>
    </source>
</evidence>
<evidence type="ECO:0000255" key="3"/>
<evidence type="ECO:0000269" key="4">
    <source>
    </source>
</evidence>
<evidence type="ECO:0000305" key="5"/>
<accession>Q9Y753</accession>
<feature type="chain" id="PRO_0000067453" description="Squalene synthase">
    <location>
        <begin position="1"/>
        <end position="445"/>
    </location>
</feature>
<feature type="transmembrane region" description="Helical" evidence="3">
    <location>
        <begin position="291"/>
        <end position="311"/>
    </location>
</feature>
<feature type="transmembrane region" description="Helical" evidence="3">
    <location>
        <begin position="405"/>
        <end position="425"/>
    </location>
</feature>
<comment type="function">
    <text evidence="4">Catalyzes the condensation of 2 two farnesyl pyrophosphate moieties to form squalene. It is the first committed enzyme of the sterol biosynthesis pathway. Required for the biosynthesis of ergosterol.</text>
</comment>
<comment type="catalytic activity">
    <reaction>
        <text>2 (2E,6E)-farnesyl diphosphate + NADPH + H(+) = squalene + 2 diphosphate + NADP(+)</text>
        <dbReference type="Rhea" id="RHEA:32295"/>
        <dbReference type="ChEBI" id="CHEBI:15378"/>
        <dbReference type="ChEBI" id="CHEBI:15440"/>
        <dbReference type="ChEBI" id="CHEBI:33019"/>
        <dbReference type="ChEBI" id="CHEBI:57783"/>
        <dbReference type="ChEBI" id="CHEBI:58349"/>
        <dbReference type="ChEBI" id="CHEBI:175763"/>
        <dbReference type="EC" id="2.5.1.21"/>
    </reaction>
</comment>
<comment type="catalytic activity">
    <reaction>
        <text>2 (2E,6E)-farnesyl diphosphate + NADH + H(+) = squalene + 2 diphosphate + NAD(+)</text>
        <dbReference type="Rhea" id="RHEA:32299"/>
        <dbReference type="ChEBI" id="CHEBI:15378"/>
        <dbReference type="ChEBI" id="CHEBI:15440"/>
        <dbReference type="ChEBI" id="CHEBI:33019"/>
        <dbReference type="ChEBI" id="CHEBI:57540"/>
        <dbReference type="ChEBI" id="CHEBI:57945"/>
        <dbReference type="ChEBI" id="CHEBI:175763"/>
        <dbReference type="EC" id="2.5.1.21"/>
    </reaction>
</comment>
<comment type="cofactor">
    <cofactor evidence="1">
        <name>Mg(2+)</name>
        <dbReference type="ChEBI" id="CHEBI:18420"/>
    </cofactor>
</comment>
<comment type="pathway">
    <text>Terpene metabolism; lanosterol biosynthesis; lanosterol from farnesyl diphosphate: step 1/3.</text>
</comment>
<comment type="subcellular location">
    <subcellularLocation>
        <location evidence="2">Endoplasmic reticulum membrane</location>
        <topology evidence="3">Multi-pass membrane protein</topology>
    </subcellularLocation>
</comment>
<comment type="similarity">
    <text evidence="5">Belongs to the phytoene/squalene synthase family.</text>
</comment>
<name>FDFT_YARLI</name>
<dbReference type="EC" id="2.5.1.21"/>
<dbReference type="EMBL" id="AF092497">
    <property type="protein sequence ID" value="AAD22408.1"/>
    <property type="molecule type" value="Genomic_DNA"/>
</dbReference>
<dbReference type="EMBL" id="CR382127">
    <property type="protein sequence ID" value="CAG83856.1"/>
    <property type="molecule type" value="Genomic_DNA"/>
</dbReference>
<dbReference type="RefSeq" id="XP_499929.1">
    <property type="nucleotide sequence ID" value="XM_499929.1"/>
</dbReference>
<dbReference type="SMR" id="Q9Y753"/>
<dbReference type="FunCoup" id="Q9Y753">
    <property type="interactions" value="326"/>
</dbReference>
<dbReference type="STRING" id="284591.Q9Y753"/>
<dbReference type="EnsemblFungi" id="CAG83856">
    <property type="protein sequence ID" value="CAG83856"/>
    <property type="gene ID" value="YALI0_A10076g"/>
</dbReference>
<dbReference type="KEGG" id="yli:2906604"/>
<dbReference type="VEuPathDB" id="FungiDB:YALI0_A10076g"/>
<dbReference type="HOGENOM" id="CLU_031981_2_1_1"/>
<dbReference type="InParanoid" id="Q9Y753"/>
<dbReference type="OMA" id="GEACQLM"/>
<dbReference type="OrthoDB" id="103348at4891"/>
<dbReference type="UniPathway" id="UPA00767">
    <property type="reaction ID" value="UER00751"/>
</dbReference>
<dbReference type="Proteomes" id="UP000001300">
    <property type="component" value="Chromosome A"/>
</dbReference>
<dbReference type="GO" id="GO:0005789">
    <property type="term" value="C:endoplasmic reticulum membrane"/>
    <property type="evidence" value="ECO:0000318"/>
    <property type="project" value="GO_Central"/>
</dbReference>
<dbReference type="GO" id="GO:0051996">
    <property type="term" value="F:squalene synthase [NAD(P)H] activity"/>
    <property type="evidence" value="ECO:0000318"/>
    <property type="project" value="GO_Central"/>
</dbReference>
<dbReference type="GO" id="GO:0006696">
    <property type="term" value="P:ergosterol biosynthetic process"/>
    <property type="evidence" value="ECO:0000318"/>
    <property type="project" value="GO_Central"/>
</dbReference>
<dbReference type="GO" id="GO:0045338">
    <property type="term" value="P:farnesyl diphosphate metabolic process"/>
    <property type="evidence" value="ECO:0000318"/>
    <property type="project" value="GO_Central"/>
</dbReference>
<dbReference type="GO" id="GO:1902767">
    <property type="term" value="P:isoprenoid biosynthetic process via mevalonate"/>
    <property type="evidence" value="ECO:0007669"/>
    <property type="project" value="EnsemblFungi"/>
</dbReference>
<dbReference type="CDD" id="cd00683">
    <property type="entry name" value="Trans_IPPS_HH"/>
    <property type="match status" value="1"/>
</dbReference>
<dbReference type="FunFam" id="1.10.600.10:FF:000003">
    <property type="entry name" value="Farnesyl-diphosphate farnesyltransferase 1"/>
    <property type="match status" value="1"/>
</dbReference>
<dbReference type="Gene3D" id="1.10.600.10">
    <property type="entry name" value="Farnesyl Diphosphate Synthase"/>
    <property type="match status" value="1"/>
</dbReference>
<dbReference type="InterPro" id="IPR008949">
    <property type="entry name" value="Isoprenoid_synthase_dom_sf"/>
</dbReference>
<dbReference type="InterPro" id="IPR002060">
    <property type="entry name" value="Squ/phyt_synthse"/>
</dbReference>
<dbReference type="InterPro" id="IPR006449">
    <property type="entry name" value="Squal_synth-like"/>
</dbReference>
<dbReference type="InterPro" id="IPR019845">
    <property type="entry name" value="Squalene/phytoene_synthase_CS"/>
</dbReference>
<dbReference type="InterPro" id="IPR044844">
    <property type="entry name" value="Trans_IPPS_euk-type"/>
</dbReference>
<dbReference type="InterPro" id="IPR033904">
    <property type="entry name" value="Trans_IPPS_HH"/>
</dbReference>
<dbReference type="NCBIfam" id="TIGR01559">
    <property type="entry name" value="squal_synth"/>
    <property type="match status" value="1"/>
</dbReference>
<dbReference type="PANTHER" id="PTHR11626">
    <property type="entry name" value="FARNESYL-DIPHOSPHATE FARNESYLTRANSFERASE"/>
    <property type="match status" value="1"/>
</dbReference>
<dbReference type="PANTHER" id="PTHR11626:SF2">
    <property type="entry name" value="SQUALENE SYNTHASE"/>
    <property type="match status" value="1"/>
</dbReference>
<dbReference type="Pfam" id="PF00494">
    <property type="entry name" value="SQS_PSY"/>
    <property type="match status" value="1"/>
</dbReference>
<dbReference type="SFLD" id="SFLDS00005">
    <property type="entry name" value="Isoprenoid_Synthase_Type_I"/>
    <property type="match status" value="1"/>
</dbReference>
<dbReference type="SFLD" id="SFLDG01018">
    <property type="entry name" value="Squalene/Phytoene_Synthase_Lik"/>
    <property type="match status" value="1"/>
</dbReference>
<dbReference type="SUPFAM" id="SSF48576">
    <property type="entry name" value="Terpenoid synthases"/>
    <property type="match status" value="1"/>
</dbReference>
<dbReference type="PROSITE" id="PS01044">
    <property type="entry name" value="SQUALEN_PHYTOEN_SYN_1"/>
    <property type="match status" value="1"/>
</dbReference>
<dbReference type="PROSITE" id="PS01045">
    <property type="entry name" value="SQUALEN_PHYTOEN_SYN_2"/>
    <property type="match status" value="1"/>
</dbReference>
<keyword id="KW-0256">Endoplasmic reticulum</keyword>
<keyword id="KW-0414">Isoprene biosynthesis</keyword>
<keyword id="KW-0444">Lipid biosynthesis</keyword>
<keyword id="KW-0443">Lipid metabolism</keyword>
<keyword id="KW-0460">Magnesium</keyword>
<keyword id="KW-0472">Membrane</keyword>
<keyword id="KW-0511">Multifunctional enzyme</keyword>
<keyword id="KW-0521">NADP</keyword>
<keyword id="KW-1185">Reference proteome</keyword>
<keyword id="KW-0752">Steroid biosynthesis</keyword>
<keyword id="KW-0753">Steroid metabolism</keyword>
<keyword id="KW-0756">Sterol biosynthesis</keyword>
<keyword id="KW-1207">Sterol metabolism</keyword>
<keyword id="KW-0808">Transferase</keyword>
<keyword id="KW-0812">Transmembrane</keyword>
<keyword id="KW-1133">Transmembrane helix</keyword>